<proteinExistence type="inferred from homology"/>
<accession>B5RF82</accession>
<keyword id="KW-0963">Cytoplasm</keyword>
<gene>
    <name evidence="1" type="primary">rraA</name>
    <name type="ordered locus">SG3331</name>
</gene>
<feature type="chain" id="PRO_1000194874" description="Regulator of ribonuclease activity A">
    <location>
        <begin position="1"/>
        <end position="161"/>
    </location>
</feature>
<name>RRAA_SALG2</name>
<evidence type="ECO:0000255" key="1">
    <source>
        <dbReference type="HAMAP-Rule" id="MF_00471"/>
    </source>
</evidence>
<sequence>MKYDTSELCDIYQEDVNVVEPLFSNFGGRSSFGGQIITVKCFEDNGLLYDLLEQNGRGRVLLVDGGGSVRRALVDAELARLATQNEWEGLVIYGAVRQVDDLEELDIGIQAIAAIPVGAAGEGIGESDVRVNFGGVTFFSGDHLYADNTGIILSEDPLDIE</sequence>
<organism>
    <name type="scientific">Salmonella gallinarum (strain 287/91 / NCTC 13346)</name>
    <dbReference type="NCBI Taxonomy" id="550538"/>
    <lineage>
        <taxon>Bacteria</taxon>
        <taxon>Pseudomonadati</taxon>
        <taxon>Pseudomonadota</taxon>
        <taxon>Gammaproteobacteria</taxon>
        <taxon>Enterobacterales</taxon>
        <taxon>Enterobacteriaceae</taxon>
        <taxon>Salmonella</taxon>
    </lineage>
</organism>
<protein>
    <recommendedName>
        <fullName evidence="1">Regulator of ribonuclease activity A</fullName>
    </recommendedName>
</protein>
<comment type="function">
    <text evidence="1">Globally modulates RNA abundance by binding to RNase E (Rne) and regulating its endonucleolytic activity. Can modulate Rne action in a substrate-dependent manner by altering the composition of the degradosome. Modulates RNA-binding and helicase activities of the degradosome.</text>
</comment>
<comment type="subunit">
    <text evidence="1">Homotrimer. Binds to both RNA-binding sites in the C-terminal region of Rne and to RhlB.</text>
</comment>
<comment type="subcellular location">
    <subcellularLocation>
        <location evidence="1">Cytoplasm</location>
    </subcellularLocation>
</comment>
<comment type="similarity">
    <text evidence="1">Belongs to the RraA family.</text>
</comment>
<dbReference type="EMBL" id="AM933173">
    <property type="protein sequence ID" value="CAR39125.1"/>
    <property type="molecule type" value="Genomic_DNA"/>
</dbReference>
<dbReference type="RefSeq" id="WP_000872918.1">
    <property type="nucleotide sequence ID" value="NC_011274.1"/>
</dbReference>
<dbReference type="SMR" id="B5RF82"/>
<dbReference type="KEGG" id="seg:SG3331"/>
<dbReference type="HOGENOM" id="CLU_072626_4_0_6"/>
<dbReference type="Proteomes" id="UP000008321">
    <property type="component" value="Chromosome"/>
</dbReference>
<dbReference type="GO" id="GO:0005829">
    <property type="term" value="C:cytosol"/>
    <property type="evidence" value="ECO:0007669"/>
    <property type="project" value="TreeGrafter"/>
</dbReference>
<dbReference type="GO" id="GO:0060698">
    <property type="term" value="F:endoribonuclease inhibitor activity"/>
    <property type="evidence" value="ECO:0007669"/>
    <property type="project" value="UniProtKB-UniRule"/>
</dbReference>
<dbReference type="GO" id="GO:0019899">
    <property type="term" value="F:enzyme binding"/>
    <property type="evidence" value="ECO:0007669"/>
    <property type="project" value="UniProtKB-UniRule"/>
</dbReference>
<dbReference type="GO" id="GO:1902369">
    <property type="term" value="P:negative regulation of RNA catabolic process"/>
    <property type="evidence" value="ECO:0007669"/>
    <property type="project" value="TreeGrafter"/>
</dbReference>
<dbReference type="CDD" id="cd16841">
    <property type="entry name" value="RraA_family"/>
    <property type="match status" value="1"/>
</dbReference>
<dbReference type="FunFam" id="3.50.30.40:FF:000001">
    <property type="entry name" value="Regulator of ribonuclease activity A"/>
    <property type="match status" value="1"/>
</dbReference>
<dbReference type="Gene3D" id="3.50.30.40">
    <property type="entry name" value="Ribonuclease E inhibitor RraA/RraA-like"/>
    <property type="match status" value="1"/>
</dbReference>
<dbReference type="HAMAP" id="MF_00471">
    <property type="entry name" value="RraA"/>
    <property type="match status" value="1"/>
</dbReference>
<dbReference type="InterPro" id="IPR010203">
    <property type="entry name" value="RraA"/>
</dbReference>
<dbReference type="InterPro" id="IPR005493">
    <property type="entry name" value="RraA/RraA-like"/>
</dbReference>
<dbReference type="InterPro" id="IPR036704">
    <property type="entry name" value="RraA/RraA-like_sf"/>
</dbReference>
<dbReference type="InterPro" id="IPR014339">
    <property type="entry name" value="RraA_gpbac"/>
</dbReference>
<dbReference type="NCBIfam" id="TIGR01935">
    <property type="entry name" value="NOT-MenG"/>
    <property type="match status" value="1"/>
</dbReference>
<dbReference type="NCBIfam" id="NF006875">
    <property type="entry name" value="PRK09372.1"/>
    <property type="match status" value="1"/>
</dbReference>
<dbReference type="NCBIfam" id="TIGR02998">
    <property type="entry name" value="RraA_entero"/>
    <property type="match status" value="1"/>
</dbReference>
<dbReference type="PANTHER" id="PTHR33254">
    <property type="entry name" value="4-HYDROXY-4-METHYL-2-OXOGLUTARATE ALDOLASE 3-RELATED"/>
    <property type="match status" value="1"/>
</dbReference>
<dbReference type="PANTHER" id="PTHR33254:SF29">
    <property type="entry name" value="REGULATOR OF RIBONUCLEASE ACTIVITY A"/>
    <property type="match status" value="1"/>
</dbReference>
<dbReference type="Pfam" id="PF03737">
    <property type="entry name" value="RraA-like"/>
    <property type="match status" value="1"/>
</dbReference>
<dbReference type="SUPFAM" id="SSF89562">
    <property type="entry name" value="RraA-like"/>
    <property type="match status" value="1"/>
</dbReference>
<reference key="1">
    <citation type="journal article" date="2008" name="Genome Res.">
        <title>Comparative genome analysis of Salmonella enteritidis PT4 and Salmonella gallinarum 287/91 provides insights into evolutionary and host adaptation pathways.</title>
        <authorList>
            <person name="Thomson N.R."/>
            <person name="Clayton D.J."/>
            <person name="Windhorst D."/>
            <person name="Vernikos G."/>
            <person name="Davidson S."/>
            <person name="Churcher C."/>
            <person name="Quail M.A."/>
            <person name="Stevens M."/>
            <person name="Jones M.A."/>
            <person name="Watson M."/>
            <person name="Barron A."/>
            <person name="Layton A."/>
            <person name="Pickard D."/>
            <person name="Kingsley R.A."/>
            <person name="Bignell A."/>
            <person name="Clark L."/>
            <person name="Harris B."/>
            <person name="Ormond D."/>
            <person name="Abdellah Z."/>
            <person name="Brooks K."/>
            <person name="Cherevach I."/>
            <person name="Chillingworth T."/>
            <person name="Woodward J."/>
            <person name="Norberczak H."/>
            <person name="Lord A."/>
            <person name="Arrowsmith C."/>
            <person name="Jagels K."/>
            <person name="Moule S."/>
            <person name="Mungall K."/>
            <person name="Saunders M."/>
            <person name="Whitehead S."/>
            <person name="Chabalgoity J.A."/>
            <person name="Maskell D."/>
            <person name="Humphreys T."/>
            <person name="Roberts M."/>
            <person name="Barrow P.A."/>
            <person name="Dougan G."/>
            <person name="Parkhill J."/>
        </authorList>
    </citation>
    <scope>NUCLEOTIDE SEQUENCE [LARGE SCALE GENOMIC DNA]</scope>
    <source>
        <strain>287/91 / NCTC 13346</strain>
    </source>
</reference>